<organism>
    <name type="scientific">Synechocystis sp. (strain ATCC 27184 / PCC 6803 / Kazusa)</name>
    <dbReference type="NCBI Taxonomy" id="1111708"/>
    <lineage>
        <taxon>Bacteria</taxon>
        <taxon>Bacillati</taxon>
        <taxon>Cyanobacteriota</taxon>
        <taxon>Cyanophyceae</taxon>
        <taxon>Synechococcales</taxon>
        <taxon>Merismopediaceae</taxon>
        <taxon>Synechocystis</taxon>
    </lineage>
</organism>
<reference key="1">
    <citation type="journal article" date="1996" name="DNA Res.">
        <title>Sequence analysis of the genome of the unicellular cyanobacterium Synechocystis sp. strain PCC6803. II. Sequence determination of the entire genome and assignment of potential protein-coding regions.</title>
        <authorList>
            <person name="Kaneko T."/>
            <person name="Sato S."/>
            <person name="Kotani H."/>
            <person name="Tanaka A."/>
            <person name="Asamizu E."/>
            <person name="Nakamura Y."/>
            <person name="Miyajima N."/>
            <person name="Hirosawa M."/>
            <person name="Sugiura M."/>
            <person name="Sasamoto S."/>
            <person name="Kimura T."/>
            <person name="Hosouchi T."/>
            <person name="Matsuno A."/>
            <person name="Muraki A."/>
            <person name="Nakazaki N."/>
            <person name="Naruo K."/>
            <person name="Okumura S."/>
            <person name="Shimpo S."/>
            <person name="Takeuchi C."/>
            <person name="Wada T."/>
            <person name="Watanabe A."/>
            <person name="Yamada M."/>
            <person name="Yasuda M."/>
            <person name="Tabata S."/>
        </authorList>
    </citation>
    <scope>NUCLEOTIDE SEQUENCE [LARGE SCALE GENOMIC DNA]</scope>
    <source>
        <strain>ATCC 27184 / PCC 6803 / Kazusa</strain>
    </source>
</reference>
<keyword id="KW-0067">ATP-binding</keyword>
<keyword id="KW-0436">Ligase</keyword>
<keyword id="KW-0547">Nucleotide-binding</keyword>
<keyword id="KW-0658">Purine biosynthesis</keyword>
<keyword id="KW-1185">Reference proteome</keyword>
<sequence length="388" mass="42642">METKLTTVGVIGGGQLAWMMAQEAPRLGLKLAVQTPGESDPAVALADKVVLTAIADGEGTRELAEHCGVITFENEFVDLPSLEKLAQQGITFHPRLDALAPLLDKWEQRHFLQNLGLPVPDFWALESLPAQLPDFPWVLKARRHGYDGQGTQIINSPADLPDLSKAPPGSWMVESFVPYERELAVIGVRNARGEMEIYPVVETKQIDQVCRWVVAPAPIDAAIAATAQDYCRRILNHLDYVGILAIEFFLLPASTQTPTPEQRLLVNELAPRTHNSGHFSLDACHTSQFALQLQAVTGQTLGSSALRCGQAVMVNLLGYEVSTGDYQQQLDKLAALPHSHVHWYGKGDCRPGRKLGHVTLLNPDVESEPSTAWAEDLVKQVEAIWYPD</sequence>
<feature type="chain" id="PRO_0000075014" description="N5-carboxyaminoimidazole ribonucleotide synthase">
    <location>
        <begin position="1"/>
        <end position="388"/>
    </location>
</feature>
<feature type="domain" description="ATP-grasp" evidence="1">
    <location>
        <begin position="109"/>
        <end position="297"/>
    </location>
</feature>
<feature type="binding site" evidence="1">
    <location>
        <position position="105"/>
    </location>
    <ligand>
        <name>ATP</name>
        <dbReference type="ChEBI" id="CHEBI:30616"/>
    </ligand>
</feature>
<feature type="binding site" evidence="1">
    <location>
        <position position="140"/>
    </location>
    <ligand>
        <name>ATP</name>
        <dbReference type="ChEBI" id="CHEBI:30616"/>
    </ligand>
</feature>
<feature type="binding site" evidence="1">
    <location>
        <begin position="174"/>
        <end position="177"/>
    </location>
    <ligand>
        <name>ATP</name>
        <dbReference type="ChEBI" id="CHEBI:30616"/>
    </ligand>
</feature>
<feature type="binding site" evidence="1">
    <location>
        <position position="182"/>
    </location>
    <ligand>
        <name>ATP</name>
        <dbReference type="ChEBI" id="CHEBI:30616"/>
    </ligand>
</feature>
<feature type="binding site" evidence="1">
    <location>
        <begin position="267"/>
        <end position="268"/>
    </location>
    <ligand>
        <name>ATP</name>
        <dbReference type="ChEBI" id="CHEBI:30616"/>
    </ligand>
</feature>
<evidence type="ECO:0000255" key="1">
    <source>
        <dbReference type="HAMAP-Rule" id="MF_01928"/>
    </source>
</evidence>
<name>PURK_SYNY3</name>
<accession>P74724</accession>
<comment type="function">
    <text evidence="1">Catalyzes the ATP-dependent conversion of 5-aminoimidazole ribonucleotide (AIR) and HCO(3)(-) to N5-carboxyaminoimidazole ribonucleotide (N5-CAIR).</text>
</comment>
<comment type="catalytic activity">
    <reaction evidence="1">
        <text>5-amino-1-(5-phospho-beta-D-ribosyl)imidazole + hydrogencarbonate + ATP = 5-carboxyamino-1-(5-phospho-D-ribosyl)imidazole + ADP + phosphate + 2 H(+)</text>
        <dbReference type="Rhea" id="RHEA:19317"/>
        <dbReference type="ChEBI" id="CHEBI:15378"/>
        <dbReference type="ChEBI" id="CHEBI:17544"/>
        <dbReference type="ChEBI" id="CHEBI:30616"/>
        <dbReference type="ChEBI" id="CHEBI:43474"/>
        <dbReference type="ChEBI" id="CHEBI:58730"/>
        <dbReference type="ChEBI" id="CHEBI:137981"/>
        <dbReference type="ChEBI" id="CHEBI:456216"/>
        <dbReference type="EC" id="6.3.4.18"/>
    </reaction>
</comment>
<comment type="pathway">
    <text evidence="1">Purine metabolism; IMP biosynthesis via de novo pathway; 5-amino-1-(5-phospho-D-ribosyl)imidazole-4-carboxylate from 5-amino-1-(5-phospho-D-ribosyl)imidazole (N5-CAIR route): step 1/2.</text>
</comment>
<comment type="subunit">
    <text evidence="1">Homodimer.</text>
</comment>
<comment type="similarity">
    <text evidence="1">Belongs to the PurK/PurT family.</text>
</comment>
<dbReference type="EC" id="6.3.4.18" evidence="1"/>
<dbReference type="EMBL" id="BA000022">
    <property type="protein sequence ID" value="BAA18844.1"/>
    <property type="molecule type" value="Genomic_DNA"/>
</dbReference>
<dbReference type="PIR" id="S76932">
    <property type="entry name" value="S76932"/>
</dbReference>
<dbReference type="SMR" id="P74724"/>
<dbReference type="FunCoup" id="P74724">
    <property type="interactions" value="294"/>
</dbReference>
<dbReference type="STRING" id="1148.gene:10500616"/>
<dbReference type="PaxDb" id="1148-1653934"/>
<dbReference type="EnsemblBacteria" id="BAA18844">
    <property type="protein sequence ID" value="BAA18844"/>
    <property type="gene ID" value="BAA18844"/>
</dbReference>
<dbReference type="KEGG" id="syn:sll0578"/>
<dbReference type="eggNOG" id="COG0026">
    <property type="taxonomic scope" value="Bacteria"/>
</dbReference>
<dbReference type="InParanoid" id="P74724"/>
<dbReference type="PhylomeDB" id="P74724"/>
<dbReference type="UniPathway" id="UPA00074">
    <property type="reaction ID" value="UER00942"/>
</dbReference>
<dbReference type="Proteomes" id="UP000001425">
    <property type="component" value="Chromosome"/>
</dbReference>
<dbReference type="GO" id="GO:0005829">
    <property type="term" value="C:cytosol"/>
    <property type="evidence" value="ECO:0000318"/>
    <property type="project" value="GO_Central"/>
</dbReference>
<dbReference type="GO" id="GO:0034028">
    <property type="term" value="F:5-(carboxyamino)imidazole ribonucleotide synthase activity"/>
    <property type="evidence" value="ECO:0007669"/>
    <property type="project" value="UniProtKB-UniRule"/>
</dbReference>
<dbReference type="GO" id="GO:0005524">
    <property type="term" value="F:ATP binding"/>
    <property type="evidence" value="ECO:0007669"/>
    <property type="project" value="UniProtKB-KW"/>
</dbReference>
<dbReference type="GO" id="GO:0046872">
    <property type="term" value="F:metal ion binding"/>
    <property type="evidence" value="ECO:0007669"/>
    <property type="project" value="InterPro"/>
</dbReference>
<dbReference type="GO" id="GO:0004638">
    <property type="term" value="F:phosphoribosylaminoimidazole carboxylase activity"/>
    <property type="evidence" value="ECO:0007669"/>
    <property type="project" value="InterPro"/>
</dbReference>
<dbReference type="GO" id="GO:0006189">
    <property type="term" value="P:'de novo' IMP biosynthetic process"/>
    <property type="evidence" value="ECO:0007669"/>
    <property type="project" value="UniProtKB-UniRule"/>
</dbReference>
<dbReference type="Gene3D" id="3.40.50.20">
    <property type="match status" value="1"/>
</dbReference>
<dbReference type="Gene3D" id="3.30.1490.20">
    <property type="entry name" value="ATP-grasp fold, A domain"/>
    <property type="match status" value="1"/>
</dbReference>
<dbReference type="Gene3D" id="3.30.470.20">
    <property type="entry name" value="ATP-grasp fold, B domain"/>
    <property type="match status" value="1"/>
</dbReference>
<dbReference type="HAMAP" id="MF_01928">
    <property type="entry name" value="PurK"/>
    <property type="match status" value="1"/>
</dbReference>
<dbReference type="InterPro" id="IPR011761">
    <property type="entry name" value="ATP-grasp"/>
</dbReference>
<dbReference type="InterPro" id="IPR003135">
    <property type="entry name" value="ATP-grasp_carboxylate-amine"/>
</dbReference>
<dbReference type="InterPro" id="IPR013815">
    <property type="entry name" value="ATP_grasp_subdomain_1"/>
</dbReference>
<dbReference type="InterPro" id="IPR016185">
    <property type="entry name" value="PreATP-grasp_dom_sf"/>
</dbReference>
<dbReference type="InterPro" id="IPR005875">
    <property type="entry name" value="PurK"/>
</dbReference>
<dbReference type="InterPro" id="IPR040686">
    <property type="entry name" value="PurK_C"/>
</dbReference>
<dbReference type="InterPro" id="IPR054350">
    <property type="entry name" value="PurT/PurK_preATP-grasp"/>
</dbReference>
<dbReference type="InterPro" id="IPR011054">
    <property type="entry name" value="Rudment_hybrid_motif"/>
</dbReference>
<dbReference type="NCBIfam" id="NF004679">
    <property type="entry name" value="PRK06019.1-5"/>
    <property type="match status" value="1"/>
</dbReference>
<dbReference type="NCBIfam" id="TIGR01161">
    <property type="entry name" value="purK"/>
    <property type="match status" value="1"/>
</dbReference>
<dbReference type="PANTHER" id="PTHR43055">
    <property type="entry name" value="FORMATE-DEPENDENT PHOSPHORIBOSYLGLYCINAMIDE FORMYLTRANSFERASE"/>
    <property type="match status" value="1"/>
</dbReference>
<dbReference type="PANTHER" id="PTHR43055:SF1">
    <property type="entry name" value="FORMATE-DEPENDENT PHOSPHORIBOSYLGLYCINAMIDE FORMYLTRANSFERASE"/>
    <property type="match status" value="1"/>
</dbReference>
<dbReference type="Pfam" id="PF02222">
    <property type="entry name" value="ATP-grasp"/>
    <property type="match status" value="1"/>
</dbReference>
<dbReference type="Pfam" id="PF17769">
    <property type="entry name" value="PurK_C"/>
    <property type="match status" value="1"/>
</dbReference>
<dbReference type="Pfam" id="PF22660">
    <property type="entry name" value="RS_preATP-grasp-like"/>
    <property type="match status" value="1"/>
</dbReference>
<dbReference type="SUPFAM" id="SSF56059">
    <property type="entry name" value="Glutathione synthetase ATP-binding domain-like"/>
    <property type="match status" value="1"/>
</dbReference>
<dbReference type="SUPFAM" id="SSF52440">
    <property type="entry name" value="PreATP-grasp domain"/>
    <property type="match status" value="1"/>
</dbReference>
<dbReference type="SUPFAM" id="SSF51246">
    <property type="entry name" value="Rudiment single hybrid motif"/>
    <property type="match status" value="1"/>
</dbReference>
<dbReference type="PROSITE" id="PS50975">
    <property type="entry name" value="ATP_GRASP"/>
    <property type="match status" value="1"/>
</dbReference>
<gene>
    <name evidence="1" type="primary">purK</name>
    <name type="ordered locus">sll0578</name>
</gene>
<proteinExistence type="inferred from homology"/>
<protein>
    <recommendedName>
        <fullName evidence="1">N5-carboxyaminoimidazole ribonucleotide synthase</fullName>
        <shortName evidence="1">N5-CAIR synthase</shortName>
        <ecNumber evidence="1">6.3.4.18</ecNumber>
    </recommendedName>
    <alternativeName>
        <fullName evidence="1">5-(carboxyamino)imidazole ribonucleotide synthetase</fullName>
    </alternativeName>
</protein>